<keyword id="KW-0007">Acetylation</keyword>
<keyword id="KW-0963">Cytoplasm</keyword>
<keyword id="KW-0446">Lipid-binding</keyword>
<keyword id="KW-1185">Reference proteome</keyword>
<keyword id="KW-0813">Transport</keyword>
<sequence length="132" mass="15126">MAFDGTWKVDRNENYEKFMEKMGINVMKRKLGAHDNLKLTITQDGNKFTVKESSNFRNIDVVFELGVNFPYSLADGTELTGAWTIEGNKLIGKFTRVDNGKELIAVREVSGNELIQTYTYEGVEAKRFFKKE</sequence>
<evidence type="ECO:0000250" key="1"/>
<evidence type="ECO:0000250" key="2">
    <source>
        <dbReference type="UniProtKB" id="P02693"/>
    </source>
</evidence>
<evidence type="ECO:0000269" key="3">
    <source>
    </source>
</evidence>
<evidence type="ECO:0000269" key="4">
    <source>
    </source>
</evidence>
<evidence type="ECO:0000305" key="5"/>
<organism>
    <name type="scientific">Mus musculus</name>
    <name type="common">Mouse</name>
    <dbReference type="NCBI Taxonomy" id="10090"/>
    <lineage>
        <taxon>Eukaryota</taxon>
        <taxon>Metazoa</taxon>
        <taxon>Chordata</taxon>
        <taxon>Craniata</taxon>
        <taxon>Vertebrata</taxon>
        <taxon>Euteleostomi</taxon>
        <taxon>Mammalia</taxon>
        <taxon>Eutheria</taxon>
        <taxon>Euarchontoglires</taxon>
        <taxon>Glires</taxon>
        <taxon>Rodentia</taxon>
        <taxon>Myomorpha</taxon>
        <taxon>Muroidea</taxon>
        <taxon>Muridae</taxon>
        <taxon>Murinae</taxon>
        <taxon>Mus</taxon>
        <taxon>Mus</taxon>
    </lineage>
</organism>
<reference key="1">
    <citation type="journal article" date="1992" name="DNA Cell Biol.">
        <title>The mouse intestinal fatty acid binding protein gene: nucleotide sequence, pattern of developmental and regional expression, and proposed structure of its protein product.</title>
        <authorList>
            <person name="Green R.P."/>
            <person name="Sacchettini J.C."/>
            <person name="Jackson K.E."/>
            <person name="Cohn S.M."/>
            <person name="Gordon J.I."/>
        </authorList>
    </citation>
    <scope>NUCLEOTIDE SEQUENCE [MRNA]</scope>
</reference>
<reference key="2">
    <citation type="journal article" date="2005" name="Science">
        <title>The transcriptional landscape of the mammalian genome.</title>
        <authorList>
            <person name="Carninci P."/>
            <person name="Kasukawa T."/>
            <person name="Katayama S."/>
            <person name="Gough J."/>
            <person name="Frith M.C."/>
            <person name="Maeda N."/>
            <person name="Oyama R."/>
            <person name="Ravasi T."/>
            <person name="Lenhard B."/>
            <person name="Wells C."/>
            <person name="Kodzius R."/>
            <person name="Shimokawa K."/>
            <person name="Bajic V.B."/>
            <person name="Brenner S.E."/>
            <person name="Batalov S."/>
            <person name="Forrest A.R."/>
            <person name="Zavolan M."/>
            <person name="Davis M.J."/>
            <person name="Wilming L.G."/>
            <person name="Aidinis V."/>
            <person name="Allen J.E."/>
            <person name="Ambesi-Impiombato A."/>
            <person name="Apweiler R."/>
            <person name="Aturaliya R.N."/>
            <person name="Bailey T.L."/>
            <person name="Bansal M."/>
            <person name="Baxter L."/>
            <person name="Beisel K.W."/>
            <person name="Bersano T."/>
            <person name="Bono H."/>
            <person name="Chalk A.M."/>
            <person name="Chiu K.P."/>
            <person name="Choudhary V."/>
            <person name="Christoffels A."/>
            <person name="Clutterbuck D.R."/>
            <person name="Crowe M.L."/>
            <person name="Dalla E."/>
            <person name="Dalrymple B.P."/>
            <person name="de Bono B."/>
            <person name="Della Gatta G."/>
            <person name="di Bernardo D."/>
            <person name="Down T."/>
            <person name="Engstrom P."/>
            <person name="Fagiolini M."/>
            <person name="Faulkner G."/>
            <person name="Fletcher C.F."/>
            <person name="Fukushima T."/>
            <person name="Furuno M."/>
            <person name="Futaki S."/>
            <person name="Gariboldi M."/>
            <person name="Georgii-Hemming P."/>
            <person name="Gingeras T.R."/>
            <person name="Gojobori T."/>
            <person name="Green R.E."/>
            <person name="Gustincich S."/>
            <person name="Harbers M."/>
            <person name="Hayashi Y."/>
            <person name="Hensch T.K."/>
            <person name="Hirokawa N."/>
            <person name="Hill D."/>
            <person name="Huminiecki L."/>
            <person name="Iacono M."/>
            <person name="Ikeo K."/>
            <person name="Iwama A."/>
            <person name="Ishikawa T."/>
            <person name="Jakt M."/>
            <person name="Kanapin A."/>
            <person name="Katoh M."/>
            <person name="Kawasawa Y."/>
            <person name="Kelso J."/>
            <person name="Kitamura H."/>
            <person name="Kitano H."/>
            <person name="Kollias G."/>
            <person name="Krishnan S.P."/>
            <person name="Kruger A."/>
            <person name="Kummerfeld S.K."/>
            <person name="Kurochkin I.V."/>
            <person name="Lareau L.F."/>
            <person name="Lazarevic D."/>
            <person name="Lipovich L."/>
            <person name="Liu J."/>
            <person name="Liuni S."/>
            <person name="McWilliam S."/>
            <person name="Madan Babu M."/>
            <person name="Madera M."/>
            <person name="Marchionni L."/>
            <person name="Matsuda H."/>
            <person name="Matsuzawa S."/>
            <person name="Miki H."/>
            <person name="Mignone F."/>
            <person name="Miyake S."/>
            <person name="Morris K."/>
            <person name="Mottagui-Tabar S."/>
            <person name="Mulder N."/>
            <person name="Nakano N."/>
            <person name="Nakauchi H."/>
            <person name="Ng P."/>
            <person name="Nilsson R."/>
            <person name="Nishiguchi S."/>
            <person name="Nishikawa S."/>
            <person name="Nori F."/>
            <person name="Ohara O."/>
            <person name="Okazaki Y."/>
            <person name="Orlando V."/>
            <person name="Pang K.C."/>
            <person name="Pavan W.J."/>
            <person name="Pavesi G."/>
            <person name="Pesole G."/>
            <person name="Petrovsky N."/>
            <person name="Piazza S."/>
            <person name="Reed J."/>
            <person name="Reid J.F."/>
            <person name="Ring B.Z."/>
            <person name="Ringwald M."/>
            <person name="Rost B."/>
            <person name="Ruan Y."/>
            <person name="Salzberg S.L."/>
            <person name="Sandelin A."/>
            <person name="Schneider C."/>
            <person name="Schoenbach C."/>
            <person name="Sekiguchi K."/>
            <person name="Semple C.A."/>
            <person name="Seno S."/>
            <person name="Sessa L."/>
            <person name="Sheng Y."/>
            <person name="Shibata Y."/>
            <person name="Shimada H."/>
            <person name="Shimada K."/>
            <person name="Silva D."/>
            <person name="Sinclair B."/>
            <person name="Sperling S."/>
            <person name="Stupka E."/>
            <person name="Sugiura K."/>
            <person name="Sultana R."/>
            <person name="Takenaka Y."/>
            <person name="Taki K."/>
            <person name="Tammoja K."/>
            <person name="Tan S.L."/>
            <person name="Tang S."/>
            <person name="Taylor M.S."/>
            <person name="Tegner J."/>
            <person name="Teichmann S.A."/>
            <person name="Ueda H.R."/>
            <person name="van Nimwegen E."/>
            <person name="Verardo R."/>
            <person name="Wei C.L."/>
            <person name="Yagi K."/>
            <person name="Yamanishi H."/>
            <person name="Zabarovsky E."/>
            <person name="Zhu S."/>
            <person name="Zimmer A."/>
            <person name="Hide W."/>
            <person name="Bult C."/>
            <person name="Grimmond S.M."/>
            <person name="Teasdale R.D."/>
            <person name="Liu E.T."/>
            <person name="Brusic V."/>
            <person name="Quackenbush J."/>
            <person name="Wahlestedt C."/>
            <person name="Mattick J.S."/>
            <person name="Hume D.A."/>
            <person name="Kai C."/>
            <person name="Sasaki D."/>
            <person name="Tomaru Y."/>
            <person name="Fukuda S."/>
            <person name="Kanamori-Katayama M."/>
            <person name="Suzuki M."/>
            <person name="Aoki J."/>
            <person name="Arakawa T."/>
            <person name="Iida J."/>
            <person name="Imamura K."/>
            <person name="Itoh M."/>
            <person name="Kato T."/>
            <person name="Kawaji H."/>
            <person name="Kawagashira N."/>
            <person name="Kawashima T."/>
            <person name="Kojima M."/>
            <person name="Kondo S."/>
            <person name="Konno H."/>
            <person name="Nakano K."/>
            <person name="Ninomiya N."/>
            <person name="Nishio T."/>
            <person name="Okada M."/>
            <person name="Plessy C."/>
            <person name="Shibata K."/>
            <person name="Shiraki T."/>
            <person name="Suzuki S."/>
            <person name="Tagami M."/>
            <person name="Waki K."/>
            <person name="Watahiki A."/>
            <person name="Okamura-Oho Y."/>
            <person name="Suzuki H."/>
            <person name="Kawai J."/>
            <person name="Hayashizaki Y."/>
        </authorList>
    </citation>
    <scope>NUCLEOTIDE SEQUENCE [LARGE SCALE MRNA]</scope>
    <source>
        <strain>C57BL/6J</strain>
        <tissue>Small intestine</tissue>
    </source>
</reference>
<reference key="3">
    <citation type="journal article" date="2004" name="Genome Res.">
        <title>The status, quality, and expansion of the NIH full-length cDNA project: the Mammalian Gene Collection (MGC).</title>
        <authorList>
            <consortium name="The MGC Project Team"/>
        </authorList>
    </citation>
    <scope>NUCLEOTIDE SEQUENCE [LARGE SCALE MRNA]</scope>
    <source>
        <tissue>Colon</tissue>
    </source>
</reference>
<reference key="4">
    <citation type="journal article" date="2000" name="FASEB J.">
        <title>The intestinal fatty acid binding protein is not essential for dietary fat absorption in mice.</title>
        <authorList>
            <person name="Vassileva G."/>
            <person name="Huwyler L."/>
            <person name="Poirier K."/>
            <person name="Agellon L.B."/>
            <person name="Toth M.J."/>
        </authorList>
    </citation>
    <scope>FUNCTION</scope>
</reference>
<reference key="5">
    <citation type="journal article" date="1997" name="Am. J. Physiol.">
        <title>Fatty acid regulation of fatty acid-binding protein expression in the small intestine.</title>
        <authorList>
            <person name="Poirier H."/>
            <person name="Niot I."/>
            <person name="Degrace P."/>
            <person name="Monnot M.C."/>
            <person name="Bernard A."/>
            <person name="Besnard P."/>
        </authorList>
    </citation>
    <scope>TISSUE SPECIFICITY</scope>
</reference>
<reference key="6">
    <citation type="journal article" date="2010" name="Cell">
        <title>A tissue-specific atlas of mouse protein phosphorylation and expression.</title>
        <authorList>
            <person name="Huttlin E.L."/>
            <person name="Jedrychowski M.P."/>
            <person name="Elias J.E."/>
            <person name="Goswami T."/>
            <person name="Rad R."/>
            <person name="Beausoleil S.A."/>
            <person name="Villen J."/>
            <person name="Haas W."/>
            <person name="Sowa M.E."/>
            <person name="Gygi S.P."/>
        </authorList>
    </citation>
    <scope>IDENTIFICATION BY MASS SPECTROMETRY [LARGE SCALE ANALYSIS]</scope>
    <source>
        <tissue>Liver</tissue>
    </source>
</reference>
<dbReference type="EMBL" id="M65034">
    <property type="protein sequence ID" value="AAA37589.1"/>
    <property type="molecule type" value="mRNA"/>
</dbReference>
<dbReference type="EMBL" id="AK007995">
    <property type="protein sequence ID" value="BAB25397.1"/>
    <property type="molecule type" value="mRNA"/>
</dbReference>
<dbReference type="EMBL" id="BC013457">
    <property type="protein sequence ID" value="AAH13457.1"/>
    <property type="molecule type" value="mRNA"/>
</dbReference>
<dbReference type="CCDS" id="CCDS17813.1"/>
<dbReference type="RefSeq" id="NP_032006.1">
    <property type="nucleotide sequence ID" value="NM_007980.3"/>
</dbReference>
<dbReference type="SMR" id="P55050"/>
<dbReference type="FunCoup" id="P55050">
    <property type="interactions" value="563"/>
</dbReference>
<dbReference type="STRING" id="10090.ENSMUSP00000023820"/>
<dbReference type="iPTMnet" id="P55050"/>
<dbReference type="PhosphoSitePlus" id="P55050"/>
<dbReference type="jPOST" id="P55050"/>
<dbReference type="PaxDb" id="10090-ENSMUSP00000023820"/>
<dbReference type="PeptideAtlas" id="P55050"/>
<dbReference type="ProteomicsDB" id="275582"/>
<dbReference type="Antibodypedia" id="26669">
    <property type="antibodies" value="595 antibodies from 39 providers"/>
</dbReference>
<dbReference type="DNASU" id="14079"/>
<dbReference type="Ensembl" id="ENSMUST00000023820.6">
    <property type="protein sequence ID" value="ENSMUSP00000023820.6"/>
    <property type="gene ID" value="ENSMUSG00000023057.6"/>
</dbReference>
<dbReference type="GeneID" id="14079"/>
<dbReference type="KEGG" id="mmu:14079"/>
<dbReference type="UCSC" id="uc008rex.2">
    <property type="organism name" value="mouse"/>
</dbReference>
<dbReference type="AGR" id="MGI:95478"/>
<dbReference type="CTD" id="2169"/>
<dbReference type="MGI" id="MGI:95478">
    <property type="gene designation" value="Fabp2"/>
</dbReference>
<dbReference type="VEuPathDB" id="HostDB:ENSMUSG00000023057"/>
<dbReference type="eggNOG" id="KOG4015">
    <property type="taxonomic scope" value="Eukaryota"/>
</dbReference>
<dbReference type="GeneTree" id="ENSGT00800000124172"/>
<dbReference type="HOGENOM" id="CLU_113772_3_0_1"/>
<dbReference type="InParanoid" id="P55050"/>
<dbReference type="OMA" id="GINLMKR"/>
<dbReference type="OrthoDB" id="9991853at2759"/>
<dbReference type="PhylomeDB" id="P55050"/>
<dbReference type="TreeFam" id="TF316894"/>
<dbReference type="Reactome" id="R-MMU-163560">
    <property type="pathway name" value="Triglyceride catabolism"/>
</dbReference>
<dbReference type="BioGRID-ORCS" id="14079">
    <property type="hits" value="0 hits in 78 CRISPR screens"/>
</dbReference>
<dbReference type="PRO" id="PR:P55050"/>
<dbReference type="Proteomes" id="UP000000589">
    <property type="component" value="Chromosome 3"/>
</dbReference>
<dbReference type="RNAct" id="P55050">
    <property type="molecule type" value="protein"/>
</dbReference>
<dbReference type="Bgee" id="ENSMUSG00000023057">
    <property type="expression patterns" value="Expressed in small intestine Peyer's patch and 50 other cell types or tissues"/>
</dbReference>
<dbReference type="ExpressionAtlas" id="P55050">
    <property type="expression patterns" value="baseline and differential"/>
</dbReference>
<dbReference type="GO" id="GO:0045179">
    <property type="term" value="C:apical cortex"/>
    <property type="evidence" value="ECO:0007669"/>
    <property type="project" value="Ensembl"/>
</dbReference>
<dbReference type="GO" id="GO:0005902">
    <property type="term" value="C:microvillus"/>
    <property type="evidence" value="ECO:0007669"/>
    <property type="project" value="Ensembl"/>
</dbReference>
<dbReference type="GO" id="GO:0036041">
    <property type="term" value="F:long-chain fatty acid binding"/>
    <property type="evidence" value="ECO:0007669"/>
    <property type="project" value="Ensembl"/>
</dbReference>
<dbReference type="GO" id="GO:0005324">
    <property type="term" value="F:long-chain fatty acid transmembrane transporter activity"/>
    <property type="evidence" value="ECO:0007669"/>
    <property type="project" value="Ensembl"/>
</dbReference>
<dbReference type="GO" id="GO:0006631">
    <property type="term" value="P:fatty acid metabolic process"/>
    <property type="evidence" value="ECO:0007669"/>
    <property type="project" value="Ensembl"/>
</dbReference>
<dbReference type="GO" id="GO:0098856">
    <property type="term" value="P:intestinal lipid absorption"/>
    <property type="evidence" value="ECO:0007669"/>
    <property type="project" value="Ensembl"/>
</dbReference>
<dbReference type="CDD" id="cd19445">
    <property type="entry name" value="FABP2"/>
    <property type="match status" value="1"/>
</dbReference>
<dbReference type="FunFam" id="2.40.128.20:FF:000001">
    <property type="entry name" value="Fatty acid-binding protein, adipocyte"/>
    <property type="match status" value="1"/>
</dbReference>
<dbReference type="Gene3D" id="2.40.128.20">
    <property type="match status" value="1"/>
</dbReference>
<dbReference type="InterPro" id="IPR012674">
    <property type="entry name" value="Calycin"/>
</dbReference>
<dbReference type="InterPro" id="IPR031272">
    <property type="entry name" value="FABP2"/>
</dbReference>
<dbReference type="InterPro" id="IPR000463">
    <property type="entry name" value="Fatty_acid-bd"/>
</dbReference>
<dbReference type="InterPro" id="IPR031259">
    <property type="entry name" value="ILBP"/>
</dbReference>
<dbReference type="InterPro" id="IPR000566">
    <property type="entry name" value="Lipocln_cytosolic_FA-bd_dom"/>
</dbReference>
<dbReference type="PANTHER" id="PTHR11955">
    <property type="entry name" value="FATTY ACID BINDING PROTEIN"/>
    <property type="match status" value="1"/>
</dbReference>
<dbReference type="Pfam" id="PF00061">
    <property type="entry name" value="Lipocalin"/>
    <property type="match status" value="1"/>
</dbReference>
<dbReference type="PRINTS" id="PR00178">
    <property type="entry name" value="FATTYACIDBP"/>
</dbReference>
<dbReference type="SUPFAM" id="SSF50814">
    <property type="entry name" value="Lipocalins"/>
    <property type="match status" value="1"/>
</dbReference>
<dbReference type="PROSITE" id="PS00214">
    <property type="entry name" value="FABP"/>
    <property type="match status" value="1"/>
</dbReference>
<feature type="initiator methionine" description="Removed" evidence="2">
    <location>
        <position position="1"/>
    </location>
</feature>
<feature type="chain" id="PRO_0000067329" description="Fatty acid-binding protein, intestinal">
    <location>
        <begin position="2"/>
        <end position="132"/>
    </location>
</feature>
<feature type="binding site" evidence="2">
    <location>
        <position position="83"/>
    </location>
    <ligand>
        <name>hexadecanoate</name>
        <dbReference type="ChEBI" id="CHEBI:7896"/>
    </ligand>
</feature>
<feature type="binding site" evidence="2">
    <location>
        <position position="83"/>
    </location>
    <ligand>
        <name>tetradecanoate</name>
        <dbReference type="ChEBI" id="CHEBI:30807"/>
    </ligand>
</feature>
<feature type="binding site" evidence="2">
    <location>
        <position position="107"/>
    </location>
    <ligand>
        <name>hexadecanoate</name>
        <dbReference type="ChEBI" id="CHEBI:7896"/>
    </ligand>
</feature>
<feature type="binding site" evidence="2">
    <location>
        <position position="107"/>
    </location>
    <ligand>
        <name>tetradecanoate</name>
        <dbReference type="ChEBI" id="CHEBI:30807"/>
    </ligand>
</feature>
<feature type="modified residue" description="N-acetylalanine" evidence="2">
    <location>
        <position position="2"/>
    </location>
</feature>
<name>FABPI_MOUSE</name>
<proteinExistence type="evidence at protein level"/>
<gene>
    <name type="primary">Fabp2</name>
    <name type="synonym">Fabpi</name>
</gene>
<protein>
    <recommendedName>
        <fullName>Fatty acid-binding protein, intestinal</fullName>
    </recommendedName>
    <alternativeName>
        <fullName>Fatty acid-binding protein 2</fullName>
    </alternativeName>
    <alternativeName>
        <fullName>Intestinal-type fatty acid-binding protein</fullName>
        <shortName>I-FABP</shortName>
    </alternativeName>
</protein>
<accession>P55050</accession>
<comment type="function">
    <text evidence="3">FABPs are thought to play a role in the intracellular transport of long-chain fatty acids and their acyl-CoA esters. FABP2 is probably involved in triglyceride-rich lipoprotein synthesis. Binds saturated long-chain fatty acids with a high affinity, but binds with a lower affinity to unsaturated long-chain fatty acids. FABP2 may also help maintain energy homeostasis by functioning as a lipid sensor.</text>
</comment>
<comment type="subcellular location">
    <subcellularLocation>
        <location>Cytoplasm</location>
    </subcellularLocation>
</comment>
<comment type="tissue specificity">
    <text evidence="4">Expressed in the small intestine. Highest expression levels in the proximal ileum.</text>
</comment>
<comment type="domain">
    <text evidence="1">Forms a beta-barrel structure that accommodates the hydrophobic ligand in its interior.</text>
</comment>
<comment type="similarity">
    <text evidence="5">Belongs to the calycin superfamily. Fatty-acid binding protein (FABP) family.</text>
</comment>